<name>RF3_PSEAB</name>
<feature type="chain" id="PRO_1000023668" description="Peptide chain release factor 3">
    <location>
        <begin position="1"/>
        <end position="527"/>
    </location>
</feature>
<feature type="domain" description="tr-type G">
    <location>
        <begin position="9"/>
        <end position="277"/>
    </location>
</feature>
<feature type="binding site" evidence="1">
    <location>
        <begin position="18"/>
        <end position="25"/>
    </location>
    <ligand>
        <name>GTP</name>
        <dbReference type="ChEBI" id="CHEBI:37565"/>
    </ligand>
</feature>
<feature type="binding site" evidence="1">
    <location>
        <begin position="86"/>
        <end position="90"/>
    </location>
    <ligand>
        <name>GTP</name>
        <dbReference type="ChEBI" id="CHEBI:37565"/>
    </ligand>
</feature>
<feature type="binding site" evidence="1">
    <location>
        <begin position="140"/>
        <end position="143"/>
    </location>
    <ligand>
        <name>GTP</name>
        <dbReference type="ChEBI" id="CHEBI:37565"/>
    </ligand>
</feature>
<gene>
    <name evidence="1" type="primary">prfC</name>
    <name type="ordered locus">PA14_13410</name>
</gene>
<sequence>MTTQAAEVAKRRTFAIISHPDAGKTTITEKLLLMGKAIAVAGTVKSRKSDRHATSDWMEMEKQRGISITTSVMQFPYREHMINLLDTPGHEDFSEDTYRTLTAVDSALMVLDGGKGVEPRTIALMEVCRLRDTPIVSFINKLDRDIRDPIELLDEIEAVLKIKAAPITWPIGCYKDFKGVYHLADDRIIVYVPGHGHERIETKVIEKLDSDEARAHLGDLYDNFVEELELVQGACHEFDKDAFLKGEMTPVFFGTALGNFGVDQVLDCIVDWAPQPLSRATHERSVEPTEEKFSGFVFKIQANMDPKHRDRIAFMRICSGKYEKGMKMRHVRLGKDVKIADALTFFSSEREQLEEAYAGDIIGLHNHGTIQIGDTFSEGENFGFTGIPHFAPELFRRVRLKDPLKSKQLRQGLQELAEEGATQVFFPERNNDIILGAVGVLQFDVVASRLKEEYKVECAYEAINVWSARWIECDDEKKLKEFKDKAFENLSVDGGGHLTYLAPTRVNLSLMEERWPDIRFRATREHH</sequence>
<organism>
    <name type="scientific">Pseudomonas aeruginosa (strain UCBPP-PA14)</name>
    <dbReference type="NCBI Taxonomy" id="208963"/>
    <lineage>
        <taxon>Bacteria</taxon>
        <taxon>Pseudomonadati</taxon>
        <taxon>Pseudomonadota</taxon>
        <taxon>Gammaproteobacteria</taxon>
        <taxon>Pseudomonadales</taxon>
        <taxon>Pseudomonadaceae</taxon>
        <taxon>Pseudomonas</taxon>
    </lineage>
</organism>
<proteinExistence type="inferred from homology"/>
<comment type="function">
    <text evidence="1">Increases the formation of ribosomal termination complexes and stimulates activities of RF-1 and RF-2. It binds guanine nucleotides and has strong preference for UGA stop codons. It may interact directly with the ribosome. The stimulation of RF-1 and RF-2 is significantly reduced by GTP and GDP, but not by GMP.</text>
</comment>
<comment type="subcellular location">
    <subcellularLocation>
        <location evidence="1">Cytoplasm</location>
    </subcellularLocation>
</comment>
<comment type="similarity">
    <text evidence="1">Belongs to the TRAFAC class translation factor GTPase superfamily. Classic translation factor GTPase family. PrfC subfamily.</text>
</comment>
<dbReference type="EMBL" id="CP000438">
    <property type="protein sequence ID" value="ABJ13176.1"/>
    <property type="molecule type" value="Genomic_DNA"/>
</dbReference>
<dbReference type="RefSeq" id="WP_003093004.1">
    <property type="nucleotide sequence ID" value="NZ_CP034244.1"/>
</dbReference>
<dbReference type="SMR" id="Q02S69"/>
<dbReference type="KEGG" id="pau:PA14_13410"/>
<dbReference type="PseudoCAP" id="PA14_13410"/>
<dbReference type="HOGENOM" id="CLU_002794_2_1_6"/>
<dbReference type="BioCyc" id="PAER208963:G1G74-1108-MONOMER"/>
<dbReference type="Proteomes" id="UP000000653">
    <property type="component" value="Chromosome"/>
</dbReference>
<dbReference type="GO" id="GO:0005829">
    <property type="term" value="C:cytosol"/>
    <property type="evidence" value="ECO:0007669"/>
    <property type="project" value="TreeGrafter"/>
</dbReference>
<dbReference type="GO" id="GO:0005525">
    <property type="term" value="F:GTP binding"/>
    <property type="evidence" value="ECO:0007669"/>
    <property type="project" value="UniProtKB-UniRule"/>
</dbReference>
<dbReference type="GO" id="GO:0003924">
    <property type="term" value="F:GTPase activity"/>
    <property type="evidence" value="ECO:0007669"/>
    <property type="project" value="InterPro"/>
</dbReference>
<dbReference type="GO" id="GO:0097216">
    <property type="term" value="F:guanosine tetraphosphate binding"/>
    <property type="evidence" value="ECO:0007669"/>
    <property type="project" value="UniProtKB-ARBA"/>
</dbReference>
<dbReference type="GO" id="GO:0016150">
    <property type="term" value="F:translation release factor activity, codon nonspecific"/>
    <property type="evidence" value="ECO:0007669"/>
    <property type="project" value="TreeGrafter"/>
</dbReference>
<dbReference type="GO" id="GO:0016149">
    <property type="term" value="F:translation release factor activity, codon specific"/>
    <property type="evidence" value="ECO:0007669"/>
    <property type="project" value="UniProtKB-UniRule"/>
</dbReference>
<dbReference type="GO" id="GO:0006449">
    <property type="term" value="P:regulation of translational termination"/>
    <property type="evidence" value="ECO:0007669"/>
    <property type="project" value="UniProtKB-UniRule"/>
</dbReference>
<dbReference type="CDD" id="cd04169">
    <property type="entry name" value="RF3"/>
    <property type="match status" value="1"/>
</dbReference>
<dbReference type="CDD" id="cd03689">
    <property type="entry name" value="RF3_II"/>
    <property type="match status" value="1"/>
</dbReference>
<dbReference type="CDD" id="cd16259">
    <property type="entry name" value="RF3_III"/>
    <property type="match status" value="1"/>
</dbReference>
<dbReference type="FunFam" id="2.40.30.10:FF:000040">
    <property type="entry name" value="Peptide chain release factor 3"/>
    <property type="match status" value="1"/>
</dbReference>
<dbReference type="FunFam" id="3.30.70.3280:FF:000001">
    <property type="entry name" value="Peptide chain release factor 3"/>
    <property type="match status" value="1"/>
</dbReference>
<dbReference type="FunFam" id="3.40.50.300:FF:000542">
    <property type="entry name" value="Peptide chain release factor 3"/>
    <property type="match status" value="1"/>
</dbReference>
<dbReference type="Gene3D" id="3.40.50.300">
    <property type="entry name" value="P-loop containing nucleotide triphosphate hydrolases"/>
    <property type="match status" value="2"/>
</dbReference>
<dbReference type="Gene3D" id="3.30.70.3280">
    <property type="entry name" value="Peptide chain release factor 3, domain III"/>
    <property type="match status" value="1"/>
</dbReference>
<dbReference type="HAMAP" id="MF_00072">
    <property type="entry name" value="Rel_fac_3"/>
    <property type="match status" value="1"/>
</dbReference>
<dbReference type="InterPro" id="IPR053905">
    <property type="entry name" value="EF-G-like_DII"/>
</dbReference>
<dbReference type="InterPro" id="IPR035647">
    <property type="entry name" value="EFG_III/V"/>
</dbReference>
<dbReference type="InterPro" id="IPR031157">
    <property type="entry name" value="G_TR_CS"/>
</dbReference>
<dbReference type="InterPro" id="IPR027417">
    <property type="entry name" value="P-loop_NTPase"/>
</dbReference>
<dbReference type="InterPro" id="IPR004548">
    <property type="entry name" value="PrfC"/>
</dbReference>
<dbReference type="InterPro" id="IPR032090">
    <property type="entry name" value="RF3_C"/>
</dbReference>
<dbReference type="InterPro" id="IPR038467">
    <property type="entry name" value="RF3_dom_3_sf"/>
</dbReference>
<dbReference type="InterPro" id="IPR041732">
    <property type="entry name" value="RF3_GTP-bd"/>
</dbReference>
<dbReference type="InterPro" id="IPR005225">
    <property type="entry name" value="Small_GTP-bd"/>
</dbReference>
<dbReference type="InterPro" id="IPR000795">
    <property type="entry name" value="T_Tr_GTP-bd_dom"/>
</dbReference>
<dbReference type="InterPro" id="IPR009000">
    <property type="entry name" value="Transl_B-barrel_sf"/>
</dbReference>
<dbReference type="NCBIfam" id="TIGR00503">
    <property type="entry name" value="prfC"/>
    <property type="match status" value="1"/>
</dbReference>
<dbReference type="NCBIfam" id="NF001964">
    <property type="entry name" value="PRK00741.1"/>
    <property type="match status" value="1"/>
</dbReference>
<dbReference type="NCBIfam" id="TIGR00231">
    <property type="entry name" value="small_GTP"/>
    <property type="match status" value="1"/>
</dbReference>
<dbReference type="PANTHER" id="PTHR43556">
    <property type="entry name" value="PEPTIDE CHAIN RELEASE FACTOR RF3"/>
    <property type="match status" value="1"/>
</dbReference>
<dbReference type="PANTHER" id="PTHR43556:SF2">
    <property type="entry name" value="PEPTIDE CHAIN RELEASE FACTOR RF3"/>
    <property type="match status" value="1"/>
</dbReference>
<dbReference type="Pfam" id="PF22042">
    <property type="entry name" value="EF-G_D2"/>
    <property type="match status" value="1"/>
</dbReference>
<dbReference type="Pfam" id="PF00009">
    <property type="entry name" value="GTP_EFTU"/>
    <property type="match status" value="1"/>
</dbReference>
<dbReference type="Pfam" id="PF16658">
    <property type="entry name" value="RF3_C"/>
    <property type="match status" value="1"/>
</dbReference>
<dbReference type="PRINTS" id="PR00315">
    <property type="entry name" value="ELONGATNFCT"/>
</dbReference>
<dbReference type="SUPFAM" id="SSF54980">
    <property type="entry name" value="EF-G C-terminal domain-like"/>
    <property type="match status" value="1"/>
</dbReference>
<dbReference type="SUPFAM" id="SSF52540">
    <property type="entry name" value="P-loop containing nucleoside triphosphate hydrolases"/>
    <property type="match status" value="1"/>
</dbReference>
<dbReference type="SUPFAM" id="SSF50447">
    <property type="entry name" value="Translation proteins"/>
    <property type="match status" value="1"/>
</dbReference>
<dbReference type="PROSITE" id="PS00301">
    <property type="entry name" value="G_TR_1"/>
    <property type="match status" value="1"/>
</dbReference>
<dbReference type="PROSITE" id="PS51722">
    <property type="entry name" value="G_TR_2"/>
    <property type="match status" value="1"/>
</dbReference>
<keyword id="KW-0963">Cytoplasm</keyword>
<keyword id="KW-0342">GTP-binding</keyword>
<keyword id="KW-0547">Nucleotide-binding</keyword>
<keyword id="KW-0648">Protein biosynthesis</keyword>
<accession>Q02S69</accession>
<protein>
    <recommendedName>
        <fullName evidence="1">Peptide chain release factor 3</fullName>
        <shortName evidence="1">RF-3</shortName>
    </recommendedName>
</protein>
<evidence type="ECO:0000255" key="1">
    <source>
        <dbReference type="HAMAP-Rule" id="MF_00072"/>
    </source>
</evidence>
<reference key="1">
    <citation type="journal article" date="2006" name="Genome Biol.">
        <title>Genomic analysis reveals that Pseudomonas aeruginosa virulence is combinatorial.</title>
        <authorList>
            <person name="Lee D.G."/>
            <person name="Urbach J.M."/>
            <person name="Wu G."/>
            <person name="Liberati N.T."/>
            <person name="Feinbaum R.L."/>
            <person name="Miyata S."/>
            <person name="Diggins L.T."/>
            <person name="He J."/>
            <person name="Saucier M."/>
            <person name="Deziel E."/>
            <person name="Friedman L."/>
            <person name="Li L."/>
            <person name="Grills G."/>
            <person name="Montgomery K."/>
            <person name="Kucherlapati R."/>
            <person name="Rahme L.G."/>
            <person name="Ausubel F.M."/>
        </authorList>
    </citation>
    <scope>NUCLEOTIDE SEQUENCE [LARGE SCALE GENOMIC DNA]</scope>
    <source>
        <strain>UCBPP-PA14</strain>
    </source>
</reference>